<organism>
    <name type="scientific">Pyrococcus abyssi (strain GE5 / Orsay)</name>
    <dbReference type="NCBI Taxonomy" id="272844"/>
    <lineage>
        <taxon>Archaea</taxon>
        <taxon>Methanobacteriati</taxon>
        <taxon>Methanobacteriota</taxon>
        <taxon>Thermococci</taxon>
        <taxon>Thermococcales</taxon>
        <taxon>Thermococcaceae</taxon>
        <taxon>Pyrococcus</taxon>
    </lineage>
</organism>
<protein>
    <recommendedName>
        <fullName evidence="2">Translation initiation factor 2 subunit gamma</fullName>
        <ecNumber evidence="2">3.6.5.3</ecNumber>
    </recommendedName>
    <alternativeName>
        <fullName evidence="2">aIF2-gamma</fullName>
    </alternativeName>
    <alternativeName>
        <fullName evidence="2">eIF-2-gamma</fullName>
    </alternativeName>
</protein>
<proteinExistence type="evidence at protein level"/>
<reference key="1">
    <citation type="journal article" date="2003" name="Mol. Microbiol.">
        <title>An integrated analysis of the genome of the hyperthermophilic archaeon Pyrococcus abyssi.</title>
        <authorList>
            <person name="Cohen G.N."/>
            <person name="Barbe V."/>
            <person name="Flament D."/>
            <person name="Galperin M."/>
            <person name="Heilig R."/>
            <person name="Lecompte O."/>
            <person name="Poch O."/>
            <person name="Prieur D."/>
            <person name="Querellou J."/>
            <person name="Ripp R."/>
            <person name="Thierry J.-C."/>
            <person name="Van der Oost J."/>
            <person name="Weissenbach J."/>
            <person name="Zivanovic Y."/>
            <person name="Forterre P."/>
        </authorList>
    </citation>
    <scope>NUCLEOTIDE SEQUENCE [LARGE SCALE GENOMIC DNA]</scope>
    <source>
        <strain>GE5 / Orsay</strain>
    </source>
</reference>
<reference key="2">
    <citation type="journal article" date="2012" name="Curr. Microbiol.">
        <title>Re-annotation of two hyperthermophilic archaea Pyrococcus abyssi GE5 and Pyrococcus furiosus DSM 3638.</title>
        <authorList>
            <person name="Gao J."/>
            <person name="Wang J."/>
        </authorList>
    </citation>
    <scope>GENOME REANNOTATION</scope>
    <source>
        <strain>GE5 / Orsay</strain>
    </source>
</reference>
<reference evidence="5 6 7 8 9" key="3">
    <citation type="journal article" date="2002" name="EMBO J.">
        <title>The large subunit of initiation factor aIF2 is a close structural homologue of elongation factors.</title>
        <authorList>
            <person name="Schmitt E."/>
            <person name="Blanquet S."/>
            <person name="Mechulam Y."/>
        </authorList>
    </citation>
    <scope>X-RAY CRYSTALLOGRAPHY (1.85 ANGSTROMS) OF 2-411 IN COMPLEX WITH GTP AND ZINC</scope>
</reference>
<gene>
    <name evidence="2" type="primary">eif2g</name>
    <name type="synonym">aif2G</name>
    <name type="ordered locus">PYRAB04670</name>
    <name type="ORF">PAB2040</name>
</gene>
<evidence type="ECO:0000250" key="1">
    <source>
        <dbReference type="UniProtKB" id="Q980A5"/>
    </source>
</evidence>
<evidence type="ECO:0000255" key="2">
    <source>
        <dbReference type="HAMAP-Rule" id="MF_00119"/>
    </source>
</evidence>
<evidence type="ECO:0000269" key="3">
    <source>
    </source>
</evidence>
<evidence type="ECO:0000305" key="4"/>
<evidence type="ECO:0007744" key="5">
    <source>
        <dbReference type="PDB" id="1KJZ"/>
    </source>
</evidence>
<evidence type="ECO:0007744" key="6">
    <source>
        <dbReference type="PDB" id="1KK0"/>
    </source>
</evidence>
<evidence type="ECO:0007744" key="7">
    <source>
        <dbReference type="PDB" id="1KK1"/>
    </source>
</evidence>
<evidence type="ECO:0007744" key="8">
    <source>
        <dbReference type="PDB" id="1KK2"/>
    </source>
</evidence>
<evidence type="ECO:0007744" key="9">
    <source>
        <dbReference type="PDB" id="1KK3"/>
    </source>
</evidence>
<evidence type="ECO:0007829" key="10">
    <source>
        <dbReference type="PDB" id="1KJZ"/>
    </source>
</evidence>
<evidence type="ECO:0007829" key="11">
    <source>
        <dbReference type="PDB" id="1KK0"/>
    </source>
</evidence>
<evidence type="ECO:0007829" key="12">
    <source>
        <dbReference type="PDB" id="1KK1"/>
    </source>
</evidence>
<dbReference type="EC" id="3.6.5.3" evidence="2"/>
<dbReference type="EMBL" id="AJ248284">
    <property type="protein sequence ID" value="CAB49389.1"/>
    <property type="molecule type" value="Genomic_DNA"/>
</dbReference>
<dbReference type="EMBL" id="HE613800">
    <property type="protein sequence ID" value="CCE69850.1"/>
    <property type="molecule type" value="Genomic_DNA"/>
</dbReference>
<dbReference type="PIR" id="F75163">
    <property type="entry name" value="F75163"/>
</dbReference>
<dbReference type="RefSeq" id="WP_010867591.1">
    <property type="nucleotide sequence ID" value="NC_000868.1"/>
</dbReference>
<dbReference type="PDB" id="1KJZ">
    <property type="method" value="X-ray"/>
    <property type="resolution" value="1.85 A"/>
    <property type="chains" value="A=2-411"/>
</dbReference>
<dbReference type="PDB" id="1KK0">
    <property type="method" value="X-ray"/>
    <property type="resolution" value="1.95 A"/>
    <property type="chains" value="A=2-411"/>
</dbReference>
<dbReference type="PDB" id="1KK1">
    <property type="method" value="X-ray"/>
    <property type="resolution" value="1.80 A"/>
    <property type="chains" value="A=2-411"/>
</dbReference>
<dbReference type="PDB" id="1KK2">
    <property type="method" value="X-ray"/>
    <property type="resolution" value="2.10 A"/>
    <property type="chains" value="A=2-411"/>
</dbReference>
<dbReference type="PDB" id="1KK3">
    <property type="method" value="X-ray"/>
    <property type="resolution" value="1.90 A"/>
    <property type="chains" value="A=2-411"/>
</dbReference>
<dbReference type="PDBsum" id="1KJZ"/>
<dbReference type="PDBsum" id="1KK0"/>
<dbReference type="PDBsum" id="1KK1"/>
<dbReference type="PDBsum" id="1KK2"/>
<dbReference type="PDBsum" id="1KK3"/>
<dbReference type="SMR" id="Q9V1G0"/>
<dbReference type="STRING" id="272844.PAB2040"/>
<dbReference type="KEGG" id="pab:PAB2040"/>
<dbReference type="PATRIC" id="fig|272844.11.peg.494"/>
<dbReference type="eggNOG" id="arCOG01563">
    <property type="taxonomic scope" value="Archaea"/>
</dbReference>
<dbReference type="HOGENOM" id="CLU_027154_0_1_2"/>
<dbReference type="OrthoDB" id="7798at2157"/>
<dbReference type="PhylomeDB" id="Q9V1G0"/>
<dbReference type="EvolutionaryTrace" id="Q9V1G0"/>
<dbReference type="Proteomes" id="UP000000810">
    <property type="component" value="Chromosome"/>
</dbReference>
<dbReference type="Proteomes" id="UP000009139">
    <property type="component" value="Chromosome"/>
</dbReference>
<dbReference type="GO" id="GO:0005829">
    <property type="term" value="C:cytosol"/>
    <property type="evidence" value="ECO:0007669"/>
    <property type="project" value="TreeGrafter"/>
</dbReference>
<dbReference type="GO" id="GO:0005525">
    <property type="term" value="F:GTP binding"/>
    <property type="evidence" value="ECO:0007669"/>
    <property type="project" value="UniProtKB-UniRule"/>
</dbReference>
<dbReference type="GO" id="GO:0003924">
    <property type="term" value="F:GTPase activity"/>
    <property type="evidence" value="ECO:0007669"/>
    <property type="project" value="InterPro"/>
</dbReference>
<dbReference type="GO" id="GO:0046872">
    <property type="term" value="F:metal ion binding"/>
    <property type="evidence" value="ECO:0007669"/>
    <property type="project" value="UniProtKB-KW"/>
</dbReference>
<dbReference type="GO" id="GO:0003746">
    <property type="term" value="F:translation elongation factor activity"/>
    <property type="evidence" value="ECO:0007669"/>
    <property type="project" value="UniProtKB-UniRule"/>
</dbReference>
<dbReference type="GO" id="GO:0003743">
    <property type="term" value="F:translation initiation factor activity"/>
    <property type="evidence" value="ECO:0007669"/>
    <property type="project" value="UniProtKB-KW"/>
</dbReference>
<dbReference type="GO" id="GO:0000049">
    <property type="term" value="F:tRNA binding"/>
    <property type="evidence" value="ECO:0007669"/>
    <property type="project" value="InterPro"/>
</dbReference>
<dbReference type="GO" id="GO:0001731">
    <property type="term" value="P:formation of translation preinitiation complex"/>
    <property type="evidence" value="ECO:0007669"/>
    <property type="project" value="TreeGrafter"/>
</dbReference>
<dbReference type="CDD" id="cd01888">
    <property type="entry name" value="eIF2_gamma"/>
    <property type="match status" value="1"/>
</dbReference>
<dbReference type="CDD" id="cd03688">
    <property type="entry name" value="eIF2_gamma_II"/>
    <property type="match status" value="1"/>
</dbReference>
<dbReference type="CDD" id="cd15490">
    <property type="entry name" value="eIF2_gamma_III"/>
    <property type="match status" value="1"/>
</dbReference>
<dbReference type="FunFam" id="2.40.30.10:FF:000009">
    <property type="entry name" value="Eukaryotic translation initiation factor 2 subunit gamma"/>
    <property type="match status" value="1"/>
</dbReference>
<dbReference type="FunFam" id="3.40.50.300:FF:000065">
    <property type="entry name" value="Eukaryotic translation initiation factor 2 subunit gamma"/>
    <property type="match status" value="1"/>
</dbReference>
<dbReference type="FunFam" id="2.40.30.10:FF:000075">
    <property type="entry name" value="Translation initiation factor 2 subunit gamma"/>
    <property type="match status" value="1"/>
</dbReference>
<dbReference type="Gene3D" id="3.40.50.300">
    <property type="entry name" value="P-loop containing nucleotide triphosphate hydrolases"/>
    <property type="match status" value="1"/>
</dbReference>
<dbReference type="Gene3D" id="2.40.30.10">
    <property type="entry name" value="Translation factors"/>
    <property type="match status" value="2"/>
</dbReference>
<dbReference type="HAMAP" id="MF_00119">
    <property type="entry name" value="eIF_2_gamma"/>
    <property type="match status" value="1"/>
</dbReference>
<dbReference type="InterPro" id="IPR004161">
    <property type="entry name" value="EFTu-like_2"/>
</dbReference>
<dbReference type="InterPro" id="IPR050543">
    <property type="entry name" value="eIF2G"/>
</dbReference>
<dbReference type="InterPro" id="IPR015256">
    <property type="entry name" value="eIF2g_C"/>
</dbReference>
<dbReference type="InterPro" id="IPR044127">
    <property type="entry name" value="eIF2g_dom_2"/>
</dbReference>
<dbReference type="InterPro" id="IPR044128">
    <property type="entry name" value="eIF2g_GTP-bd"/>
</dbReference>
<dbReference type="InterPro" id="IPR027417">
    <property type="entry name" value="P-loop_NTPase"/>
</dbReference>
<dbReference type="InterPro" id="IPR005225">
    <property type="entry name" value="Small_GTP-bd"/>
</dbReference>
<dbReference type="InterPro" id="IPR000795">
    <property type="entry name" value="T_Tr_GTP-bd_dom"/>
</dbReference>
<dbReference type="InterPro" id="IPR022424">
    <property type="entry name" value="TIF2_gsu"/>
</dbReference>
<dbReference type="InterPro" id="IPR009000">
    <property type="entry name" value="Transl_B-barrel_sf"/>
</dbReference>
<dbReference type="InterPro" id="IPR009001">
    <property type="entry name" value="Transl_elong_EF1A/Init_IF2_C"/>
</dbReference>
<dbReference type="NCBIfam" id="TIGR03680">
    <property type="entry name" value="eif2g_arch"/>
    <property type="match status" value="1"/>
</dbReference>
<dbReference type="NCBIfam" id="NF003077">
    <property type="entry name" value="PRK04000.1"/>
    <property type="match status" value="1"/>
</dbReference>
<dbReference type="NCBIfam" id="TIGR00231">
    <property type="entry name" value="small_GTP"/>
    <property type="match status" value="1"/>
</dbReference>
<dbReference type="PANTHER" id="PTHR42854">
    <property type="entry name" value="EUKARYOTIC TRANSLATION INITIATION FACTOR 2 SUBUNIT 3 FAMILY MEMBER"/>
    <property type="match status" value="1"/>
</dbReference>
<dbReference type="PANTHER" id="PTHR42854:SF3">
    <property type="entry name" value="EUKARYOTIC TRANSLATION INITIATION FACTOR 2 SUBUNIT 3-RELATED"/>
    <property type="match status" value="1"/>
</dbReference>
<dbReference type="Pfam" id="PF09173">
    <property type="entry name" value="eIF2_C"/>
    <property type="match status" value="1"/>
</dbReference>
<dbReference type="Pfam" id="PF00009">
    <property type="entry name" value="GTP_EFTU"/>
    <property type="match status" value="1"/>
</dbReference>
<dbReference type="Pfam" id="PF03144">
    <property type="entry name" value="GTP_EFTU_D2"/>
    <property type="match status" value="1"/>
</dbReference>
<dbReference type="PRINTS" id="PR00315">
    <property type="entry name" value="ELONGATNFCT"/>
</dbReference>
<dbReference type="SUPFAM" id="SSF50465">
    <property type="entry name" value="EF-Tu/eEF-1alpha/eIF2-gamma C-terminal domain"/>
    <property type="match status" value="1"/>
</dbReference>
<dbReference type="SUPFAM" id="SSF52540">
    <property type="entry name" value="P-loop containing nucleoside triphosphate hydrolases"/>
    <property type="match status" value="1"/>
</dbReference>
<dbReference type="SUPFAM" id="SSF50447">
    <property type="entry name" value="Translation proteins"/>
    <property type="match status" value="1"/>
</dbReference>
<dbReference type="PROSITE" id="PS51722">
    <property type="entry name" value="G_TR_2"/>
    <property type="match status" value="1"/>
</dbReference>
<name>IF2G_PYRAB</name>
<accession>Q9V1G0</accession>
<accession>G8ZGH1</accession>
<keyword id="KW-0002">3D-structure</keyword>
<keyword id="KW-0342">GTP-binding</keyword>
<keyword id="KW-0378">Hydrolase</keyword>
<keyword id="KW-0396">Initiation factor</keyword>
<keyword id="KW-0460">Magnesium</keyword>
<keyword id="KW-0479">Metal-binding</keyword>
<keyword id="KW-0547">Nucleotide-binding</keyword>
<keyword id="KW-0648">Protein biosynthesis</keyword>
<keyword id="KW-0862">Zinc</keyword>
<comment type="function">
    <text evidence="2">eIF-2 functions in the early steps of protein synthesis by forming a ternary complex with GTP and initiator tRNA.</text>
</comment>
<comment type="catalytic activity">
    <reaction evidence="2">
        <text>GTP + H2O = GDP + phosphate + H(+)</text>
        <dbReference type="Rhea" id="RHEA:19669"/>
        <dbReference type="ChEBI" id="CHEBI:15377"/>
        <dbReference type="ChEBI" id="CHEBI:15378"/>
        <dbReference type="ChEBI" id="CHEBI:37565"/>
        <dbReference type="ChEBI" id="CHEBI:43474"/>
        <dbReference type="ChEBI" id="CHEBI:58189"/>
        <dbReference type="EC" id="3.6.5.3"/>
    </reaction>
</comment>
<comment type="cofactor">
    <cofactor evidence="2 3">
        <name>Mg(2+)</name>
        <dbReference type="ChEBI" id="CHEBI:18420"/>
    </cofactor>
</comment>
<comment type="subunit">
    <text evidence="2">Heterotrimer composed of an alpha, a beta and a gamma chain.</text>
</comment>
<comment type="similarity">
    <text evidence="2 4">Belongs to the TRAFAC class translation factor GTPase superfamily. Classic translation factor GTPase family. EIF2G subfamily.</text>
</comment>
<feature type="chain" id="PRO_0000137459" description="Translation initiation factor 2 subunit gamma">
    <location>
        <begin position="1"/>
        <end position="411"/>
    </location>
</feature>
<feature type="domain" description="tr-type G" evidence="2">
    <location>
        <begin position="9"/>
        <end position="203"/>
    </location>
</feature>
<feature type="region of interest" description="G1" evidence="1">
    <location>
        <begin position="18"/>
        <end position="25"/>
    </location>
</feature>
<feature type="region of interest" description="G2" evidence="1">
    <location>
        <begin position="46"/>
        <end position="50"/>
    </location>
</feature>
<feature type="region of interest" description="G3" evidence="1">
    <location>
        <begin position="90"/>
        <end position="93"/>
    </location>
</feature>
<feature type="region of interest" description="G4" evidence="1">
    <location>
        <begin position="146"/>
        <end position="149"/>
    </location>
</feature>
<feature type="region of interest" description="G5" evidence="1">
    <location>
        <begin position="181"/>
        <end position="183"/>
    </location>
</feature>
<feature type="binding site" evidence="2 3 7 8 9">
    <location>
        <begin position="21"/>
        <end position="26"/>
    </location>
    <ligand>
        <name>GTP</name>
        <dbReference type="ChEBI" id="CHEBI:37565"/>
    </ligand>
</feature>
<feature type="binding site" evidence="1 2">
    <location>
        <position position="21"/>
    </location>
    <ligand>
        <name>Mg(2+)</name>
        <dbReference type="ChEBI" id="CHEBI:18420"/>
        <label>2</label>
    </ligand>
</feature>
<feature type="binding site" evidence="2 3 7 8 9">
    <location>
        <position position="25"/>
    </location>
    <ligand>
        <name>Mg(2+)</name>
        <dbReference type="ChEBI" id="CHEBI:18420"/>
        <label>1</label>
    </ligand>
</feature>
<feature type="binding site" evidence="1 2">
    <location>
        <position position="46"/>
    </location>
    <ligand>
        <name>Mg(2+)</name>
        <dbReference type="ChEBI" id="CHEBI:18420"/>
        <label>2</label>
    </ligand>
</feature>
<feature type="binding site" evidence="1 2">
    <location>
        <position position="48"/>
    </location>
    <ligand>
        <name>Mg(2+)</name>
        <dbReference type="ChEBI" id="CHEBI:18420"/>
        <label>1</label>
    </ligand>
</feature>
<feature type="binding site" evidence="2 3 5 6 7 8 9">
    <location>
        <position position="61"/>
    </location>
    <ligand>
        <name>Zn(2+)</name>
        <dbReference type="ChEBI" id="CHEBI:29105"/>
    </ligand>
</feature>
<feature type="binding site" evidence="2 3 5 6 7 8 9">
    <location>
        <position position="64"/>
    </location>
    <ligand>
        <name>Zn(2+)</name>
        <dbReference type="ChEBI" id="CHEBI:29105"/>
    </ligand>
</feature>
<feature type="binding site" evidence="2 3 5 6 7 8 9">
    <location>
        <position position="73"/>
    </location>
    <ligand>
        <name>Zn(2+)</name>
        <dbReference type="ChEBI" id="CHEBI:29105"/>
    </ligand>
</feature>
<feature type="binding site" evidence="2 3 5 6 7 8 9">
    <location>
        <position position="76"/>
    </location>
    <ligand>
        <name>Zn(2+)</name>
        <dbReference type="ChEBI" id="CHEBI:29105"/>
    </ligand>
</feature>
<feature type="binding site" evidence="2 3 7 8 9">
    <location>
        <begin position="146"/>
        <end position="149"/>
    </location>
    <ligand>
        <name>GTP</name>
        <dbReference type="ChEBI" id="CHEBI:37565"/>
    </ligand>
</feature>
<feature type="binding site" evidence="2 3 7 8 9">
    <location>
        <begin position="181"/>
        <end position="183"/>
    </location>
    <ligand>
        <name>GTP</name>
        <dbReference type="ChEBI" id="CHEBI:37565"/>
    </ligand>
</feature>
<feature type="strand" evidence="12">
    <location>
        <begin position="9"/>
        <end position="17"/>
    </location>
</feature>
<feature type="turn" evidence="11">
    <location>
        <begin position="20"/>
        <end position="23"/>
    </location>
</feature>
<feature type="helix" evidence="12">
    <location>
        <begin position="24"/>
        <end position="32"/>
    </location>
</feature>
<feature type="helix" evidence="12">
    <location>
        <begin position="41"/>
        <end position="44"/>
    </location>
</feature>
<feature type="strand" evidence="12">
    <location>
        <begin position="47"/>
        <end position="49"/>
    </location>
</feature>
<feature type="strand" evidence="12">
    <location>
        <begin position="52"/>
        <end position="60"/>
    </location>
</feature>
<feature type="turn" evidence="12">
    <location>
        <begin position="62"/>
        <end position="64"/>
    </location>
</feature>
<feature type="strand" evidence="12">
    <location>
        <begin position="67"/>
        <end position="72"/>
    </location>
</feature>
<feature type="turn" evidence="12">
    <location>
        <begin position="74"/>
        <end position="76"/>
    </location>
</feature>
<feature type="strand" evidence="12">
    <location>
        <begin position="81"/>
        <end position="90"/>
    </location>
</feature>
<feature type="helix" evidence="12">
    <location>
        <begin position="94"/>
        <end position="103"/>
    </location>
</feature>
<feature type="helix" evidence="12">
    <location>
        <begin position="105"/>
        <end position="107"/>
    </location>
</feature>
<feature type="strand" evidence="12">
    <location>
        <begin position="109"/>
        <end position="116"/>
    </location>
</feature>
<feature type="strand" evidence="10">
    <location>
        <begin position="119"/>
        <end position="121"/>
    </location>
</feature>
<feature type="helix" evidence="12">
    <location>
        <begin position="124"/>
        <end position="136"/>
    </location>
</feature>
<feature type="strand" evidence="12">
    <location>
        <begin position="141"/>
        <end position="146"/>
    </location>
</feature>
<feature type="helix" evidence="12">
    <location>
        <begin position="148"/>
        <end position="150"/>
    </location>
</feature>
<feature type="helix" evidence="12">
    <location>
        <begin position="153"/>
        <end position="167"/>
    </location>
</feature>
<feature type="turn" evidence="12">
    <location>
        <begin position="171"/>
        <end position="174"/>
    </location>
</feature>
<feature type="strand" evidence="12">
    <location>
        <begin position="177"/>
        <end position="179"/>
    </location>
</feature>
<feature type="turn" evidence="12">
    <location>
        <begin position="182"/>
        <end position="185"/>
    </location>
</feature>
<feature type="helix" evidence="12">
    <location>
        <begin position="188"/>
        <end position="198"/>
    </location>
</feature>
<feature type="strand" evidence="12">
    <location>
        <begin position="211"/>
        <end position="218"/>
    </location>
</feature>
<feature type="strand" evidence="12">
    <location>
        <begin position="234"/>
        <end position="242"/>
    </location>
</feature>
<feature type="strand" evidence="12">
    <location>
        <begin position="249"/>
        <end position="260"/>
    </location>
</feature>
<feature type="strand" evidence="12">
    <location>
        <begin position="263"/>
        <end position="278"/>
    </location>
</feature>
<feature type="strand" evidence="12">
    <location>
        <begin position="281"/>
        <end position="286"/>
    </location>
</feature>
<feature type="strand" evidence="12">
    <location>
        <begin position="288"/>
        <end position="290"/>
    </location>
</feature>
<feature type="strand" evidence="12">
    <location>
        <begin position="292"/>
        <end position="298"/>
    </location>
</feature>
<feature type="helix" evidence="12">
    <location>
        <begin position="300"/>
        <end position="302"/>
    </location>
</feature>
<feature type="helix" evidence="12">
    <location>
        <begin position="304"/>
        <end position="306"/>
    </location>
</feature>
<feature type="turn" evidence="12">
    <location>
        <begin position="307"/>
        <end position="310"/>
    </location>
</feature>
<feature type="strand" evidence="12">
    <location>
        <begin position="312"/>
        <end position="314"/>
    </location>
</feature>
<feature type="strand" evidence="12">
    <location>
        <begin position="322"/>
        <end position="332"/>
    </location>
</feature>
<feature type="strand" evidence="10">
    <location>
        <begin position="337"/>
        <end position="339"/>
    </location>
</feature>
<feature type="helix" evidence="10">
    <location>
        <begin position="340"/>
        <end position="343"/>
    </location>
</feature>
<feature type="strand" evidence="12">
    <location>
        <begin position="353"/>
        <end position="358"/>
    </location>
</feature>
<feature type="strand" evidence="12">
    <location>
        <begin position="361"/>
        <end position="371"/>
    </location>
</feature>
<feature type="strand" evidence="12">
    <location>
        <begin position="374"/>
        <end position="384"/>
    </location>
</feature>
<feature type="strand" evidence="12">
    <location>
        <begin position="390"/>
        <end position="397"/>
    </location>
</feature>
<feature type="strand" evidence="12">
    <location>
        <begin position="400"/>
        <end position="410"/>
    </location>
</feature>
<sequence length="411" mass="44931">MGEKRKSRQAEVNIGMVGHVDHGKTTLTKALTGVWTDTHSEELRRGITIKIGFADAEIRRCPNCGRYSTSPVCPYCGHETEFVRRVSFIDAPGHEALMTTMLAGASLMDGAILVIAANEPCPRPQTREHLMALQIIGQKNIIIAQNKIELVDKEKALENYRQIKEFIEGTVAENAPIIPISALHGANIDVLVKAIEDFIPTPKRDPNKPPKMLVLRSFDVNKPGTPPEKLVGGVLGGSIVQGKLKVGDEIEIRPGVPYEEHGRIKYEPITTEIVSLQAGGQFVEEAYPGGLVGVGTKLDPYLTKGDLMAGNVVGKPGKLPPVWDSLRLEVHLLERVVGTEQELKVEPIKRKEVLLLNVGTARTMGLVTGLGKDEIEVKLQIPVCAEPGDRVAISRQIGSRWRLIGYGIIKE</sequence>